<keyword id="KW-0556">Organic radical</keyword>
<comment type="function">
    <text evidence="1">Acts as a radical domain for damaged PFL and possibly other radical proteins.</text>
</comment>
<dbReference type="EMBL" id="CP001120">
    <property type="protein sequence ID" value="ACF70278.1"/>
    <property type="molecule type" value="Genomic_DNA"/>
</dbReference>
<dbReference type="RefSeq" id="WP_000627811.1">
    <property type="nucleotide sequence ID" value="NC_011083.1"/>
</dbReference>
<dbReference type="SMR" id="B4TE27"/>
<dbReference type="GeneID" id="66757020"/>
<dbReference type="KEGG" id="seh:SeHA_C2862"/>
<dbReference type="HOGENOM" id="CLU_133780_0_0_6"/>
<dbReference type="Proteomes" id="UP000001866">
    <property type="component" value="Chromosome"/>
</dbReference>
<dbReference type="GO" id="GO:0005829">
    <property type="term" value="C:cytosol"/>
    <property type="evidence" value="ECO:0007669"/>
    <property type="project" value="TreeGrafter"/>
</dbReference>
<dbReference type="GO" id="GO:0008861">
    <property type="term" value="F:formate C-acetyltransferase activity"/>
    <property type="evidence" value="ECO:0007669"/>
    <property type="project" value="TreeGrafter"/>
</dbReference>
<dbReference type="FunFam" id="3.20.70.20:FF:000002">
    <property type="entry name" value="Autonomous glycyl radical cofactor"/>
    <property type="match status" value="1"/>
</dbReference>
<dbReference type="Gene3D" id="3.20.70.20">
    <property type="match status" value="1"/>
</dbReference>
<dbReference type="HAMAP" id="MF_00806">
    <property type="entry name" value="GrcA"/>
    <property type="match status" value="1"/>
</dbReference>
<dbReference type="InterPro" id="IPR050244">
    <property type="entry name" value="Auton_GlycylRad_Cofactor"/>
</dbReference>
<dbReference type="InterPro" id="IPR019777">
    <property type="entry name" value="Form_AcTrfase_GR_CS"/>
</dbReference>
<dbReference type="InterPro" id="IPR001150">
    <property type="entry name" value="Gly_radical"/>
</dbReference>
<dbReference type="InterPro" id="IPR011140">
    <property type="entry name" value="Glycyl_radical_cofactor_GrcA"/>
</dbReference>
<dbReference type="NCBIfam" id="TIGR04365">
    <property type="entry name" value="spare_glycyl"/>
    <property type="match status" value="1"/>
</dbReference>
<dbReference type="PANTHER" id="PTHR30191">
    <property type="entry name" value="FORMATE ACETYLTRANSFERASE"/>
    <property type="match status" value="1"/>
</dbReference>
<dbReference type="PANTHER" id="PTHR30191:SF0">
    <property type="entry name" value="FORMATE ACETYLTRANSFERASE 1"/>
    <property type="match status" value="1"/>
</dbReference>
<dbReference type="Pfam" id="PF01228">
    <property type="entry name" value="Gly_radical"/>
    <property type="match status" value="1"/>
</dbReference>
<dbReference type="PIRSF" id="PIRSF000378">
    <property type="entry name" value="Gly_radicl_yfiD"/>
    <property type="match status" value="1"/>
</dbReference>
<dbReference type="SUPFAM" id="SSF51998">
    <property type="entry name" value="PFL-like glycyl radical enzymes"/>
    <property type="match status" value="1"/>
</dbReference>
<dbReference type="PROSITE" id="PS00850">
    <property type="entry name" value="GLY_RADICAL_1"/>
    <property type="match status" value="1"/>
</dbReference>
<dbReference type="PROSITE" id="PS51149">
    <property type="entry name" value="GLY_RADICAL_2"/>
    <property type="match status" value="1"/>
</dbReference>
<name>GRCA_SALHS</name>
<evidence type="ECO:0000255" key="1">
    <source>
        <dbReference type="HAMAP-Rule" id="MF_00806"/>
    </source>
</evidence>
<feature type="chain" id="PRO_1000133997" description="Autonomous glycyl radical cofactor">
    <location>
        <begin position="1"/>
        <end position="127"/>
    </location>
</feature>
<feature type="domain" description="Glycine radical" evidence="1">
    <location>
        <begin position="5"/>
        <end position="127"/>
    </location>
</feature>
<feature type="modified residue" description="Glycine radical" evidence="1">
    <location>
        <position position="102"/>
    </location>
</feature>
<gene>
    <name evidence="1" type="primary">grcA</name>
    <name type="ordered locus">SeHA_C2862</name>
</gene>
<organism>
    <name type="scientific">Salmonella heidelberg (strain SL476)</name>
    <dbReference type="NCBI Taxonomy" id="454169"/>
    <lineage>
        <taxon>Bacteria</taxon>
        <taxon>Pseudomonadati</taxon>
        <taxon>Pseudomonadota</taxon>
        <taxon>Gammaproteobacteria</taxon>
        <taxon>Enterobacterales</taxon>
        <taxon>Enterobacteriaceae</taxon>
        <taxon>Salmonella</taxon>
    </lineage>
</organism>
<protein>
    <recommendedName>
        <fullName evidence="1">Autonomous glycyl radical cofactor</fullName>
    </recommendedName>
</protein>
<accession>B4TE27</accession>
<reference key="1">
    <citation type="journal article" date="2011" name="J. Bacteriol.">
        <title>Comparative genomics of 28 Salmonella enterica isolates: evidence for CRISPR-mediated adaptive sublineage evolution.</title>
        <authorList>
            <person name="Fricke W.F."/>
            <person name="Mammel M.K."/>
            <person name="McDermott P.F."/>
            <person name="Tartera C."/>
            <person name="White D.G."/>
            <person name="Leclerc J.E."/>
            <person name="Ravel J."/>
            <person name="Cebula T.A."/>
        </authorList>
    </citation>
    <scope>NUCLEOTIDE SEQUENCE [LARGE SCALE GENOMIC DNA]</scope>
    <source>
        <strain>SL476</strain>
    </source>
</reference>
<sequence>MITGIQITKAANDDLLNSFWLLDSEKGEARCIVAKSGFAEDEVVAVSKLGEIEYREIPMEVKPEVRVEGGQHLNVNVLRRETLEDAVKHPEKYPQLTIRVSGYAVRFNSLTPEQQRDVIARTFTESL</sequence>
<proteinExistence type="inferred from homology"/>